<feature type="signal peptide" evidence="2">
    <location>
        <begin position="1"/>
        <end position="22"/>
    </location>
</feature>
<feature type="chain" id="PRO_0000009213" description="Type 1 fimbrin D-mannose specific adhesin">
    <location>
        <begin position="23"/>
        <end position="335"/>
    </location>
</feature>
<feature type="sequence conflict" description="In Ref. 1; AAA75420." evidence="3" ref="1">
    <original>G</original>
    <variation>A</variation>
    <location>
        <position position="61"/>
    </location>
</feature>
<feature type="sequence conflict" description="In Ref. 1; AAA75420." evidence="3" ref="1">
    <original>F</original>
    <variation>S</variation>
    <location>
        <position position="118"/>
    </location>
</feature>
<organism>
    <name type="scientific">Salmonella typhimurium (strain LT2 / SGSC1412 / ATCC 700720)</name>
    <dbReference type="NCBI Taxonomy" id="99287"/>
    <lineage>
        <taxon>Bacteria</taxon>
        <taxon>Pseudomonadati</taxon>
        <taxon>Pseudomonadota</taxon>
        <taxon>Gammaproteobacteria</taxon>
        <taxon>Enterobacterales</taxon>
        <taxon>Enterobacteriaceae</taxon>
        <taxon>Salmonella</taxon>
    </lineage>
</organism>
<accession>P37925</accession>
<gene>
    <name type="primary">fimH</name>
    <name type="ordered locus">STM0547</name>
</gene>
<sequence>MKIYSALLLAGTALFFTHPALATVCRNSNGTATDIFYDLSDVFTSGNNQPGQVVTLPEKSGWVGVNATCPAGTTVNYTYRSYVSELPVQSTEGNFKYLKLNDYLLGAMSITDSVAGVFYPPRNYILMGVDYNVSQQKPFGVQDSKLVFKLKVIRPFINMVTIPRQTMFTVYVTTSTGDALSTPVYTISYSGKVEVPQNCEVNAGQVVEFDFGDIGASLFSQAGAGNRPQGVTPQTKTIAIKCTNVAAQAYLSMRLEAEKASGQAMVSDNPDLGFVVANSNGTPLTPNNLSSKIPFHLDDNAAARVGIRAWPISVTGIKPAEGPFTARGYLRVDYD</sequence>
<proteinExistence type="inferred from homology"/>
<dbReference type="EMBL" id="L19338">
    <property type="protein sequence ID" value="AAA75420.1"/>
    <property type="molecule type" value="Genomic_DNA"/>
</dbReference>
<dbReference type="EMBL" id="AE006468">
    <property type="protein sequence ID" value="AAL19501.1"/>
    <property type="molecule type" value="Genomic_DNA"/>
</dbReference>
<dbReference type="RefSeq" id="NP_459542.1">
    <property type="nucleotide sequence ID" value="NC_003197.2"/>
</dbReference>
<dbReference type="RefSeq" id="WP_000708653.1">
    <property type="nucleotide sequence ID" value="NC_003197.2"/>
</dbReference>
<dbReference type="SMR" id="P37925"/>
<dbReference type="STRING" id="99287.STM0547"/>
<dbReference type="PaxDb" id="99287-STM0547"/>
<dbReference type="DNASU" id="1252067"/>
<dbReference type="GeneID" id="1252067"/>
<dbReference type="KEGG" id="stm:STM0547"/>
<dbReference type="PATRIC" id="fig|99287.12.peg.580"/>
<dbReference type="HOGENOM" id="CLU_066608_1_0_6"/>
<dbReference type="OMA" id="IKCTNVE"/>
<dbReference type="PhylomeDB" id="P37925"/>
<dbReference type="BioCyc" id="SENT99287:STM0547-MONOMER"/>
<dbReference type="Proteomes" id="UP000001014">
    <property type="component" value="Chromosome"/>
</dbReference>
<dbReference type="GO" id="GO:0009289">
    <property type="term" value="C:pilus"/>
    <property type="evidence" value="ECO:0000318"/>
    <property type="project" value="GO_Central"/>
</dbReference>
<dbReference type="GO" id="GO:0043709">
    <property type="term" value="P:cell adhesion involved in single-species biofilm formation"/>
    <property type="evidence" value="ECO:0000318"/>
    <property type="project" value="GO_Central"/>
</dbReference>
<dbReference type="Gene3D" id="2.60.40.1090">
    <property type="entry name" value="Fimbrial-type adhesion domain"/>
    <property type="match status" value="1"/>
</dbReference>
<dbReference type="InterPro" id="IPR000259">
    <property type="entry name" value="Adhesion_dom_fimbrial"/>
</dbReference>
<dbReference type="InterPro" id="IPR036937">
    <property type="entry name" value="Adhesion_dom_fimbrial_sf"/>
</dbReference>
<dbReference type="InterPro" id="IPR008966">
    <property type="entry name" value="Adhesion_dom_sf"/>
</dbReference>
<dbReference type="InterPro" id="IPR050263">
    <property type="entry name" value="Bact_Fimbrial_Adh_Pro"/>
</dbReference>
<dbReference type="NCBIfam" id="NF011746">
    <property type="entry name" value="PRK15199.1"/>
    <property type="match status" value="1"/>
</dbReference>
<dbReference type="PANTHER" id="PTHR33420">
    <property type="entry name" value="FIMBRIAL SUBUNIT ELFA-RELATED"/>
    <property type="match status" value="1"/>
</dbReference>
<dbReference type="PANTHER" id="PTHR33420:SF31">
    <property type="entry name" value="TYPE 1 FIMBRIN D-MANNOSE SPECIFIC ADHESIN"/>
    <property type="match status" value="1"/>
</dbReference>
<dbReference type="Pfam" id="PF00419">
    <property type="entry name" value="Fimbrial"/>
    <property type="match status" value="1"/>
</dbReference>
<dbReference type="SUPFAM" id="SSF49401">
    <property type="entry name" value="Bacterial adhesins"/>
    <property type="match status" value="1"/>
</dbReference>
<name>FIMH_SALTY</name>
<keyword id="KW-0281">Fimbrium</keyword>
<keyword id="KW-1185">Reference proteome</keyword>
<keyword id="KW-0732">Signal</keyword>
<comment type="function">
    <text evidence="1">Involved in regulation of length and mediation of adhesion of type 1 fimbriae (but not necessary for the production of fimbriae). A mannose-binding adhesin (By similarity).</text>
</comment>
<comment type="subcellular location">
    <subcellularLocation>
        <location evidence="1">Fimbrium</location>
    </subcellularLocation>
</comment>
<comment type="similarity">
    <text evidence="3">Belongs to the fimbrial protein family.</text>
</comment>
<evidence type="ECO:0000250" key="1">
    <source>
        <dbReference type="UniProtKB" id="P08191"/>
    </source>
</evidence>
<evidence type="ECO:0000255" key="2"/>
<evidence type="ECO:0000305" key="3"/>
<reference key="1">
    <citation type="submission" date="1993-06" db="EMBL/GenBank/DDBJ databases">
        <authorList>
            <person name="Swenson D.L."/>
            <person name="Clegg S."/>
        </authorList>
    </citation>
    <scope>NUCLEOTIDE SEQUENCE [GENOMIC DNA]</scope>
</reference>
<reference key="2">
    <citation type="journal article" date="2001" name="Nature">
        <title>Complete genome sequence of Salmonella enterica serovar Typhimurium LT2.</title>
        <authorList>
            <person name="McClelland M."/>
            <person name="Sanderson K.E."/>
            <person name="Spieth J."/>
            <person name="Clifton S.W."/>
            <person name="Latreille P."/>
            <person name="Courtney L."/>
            <person name="Porwollik S."/>
            <person name="Ali J."/>
            <person name="Dante M."/>
            <person name="Du F."/>
            <person name="Hou S."/>
            <person name="Layman D."/>
            <person name="Leonard S."/>
            <person name="Nguyen C."/>
            <person name="Scott K."/>
            <person name="Holmes A."/>
            <person name="Grewal N."/>
            <person name="Mulvaney E."/>
            <person name="Ryan E."/>
            <person name="Sun H."/>
            <person name="Florea L."/>
            <person name="Miller W."/>
            <person name="Stoneking T."/>
            <person name="Nhan M."/>
            <person name="Waterston R."/>
            <person name="Wilson R.K."/>
        </authorList>
    </citation>
    <scope>NUCLEOTIDE SEQUENCE [LARGE SCALE GENOMIC DNA]</scope>
    <source>
        <strain>LT2 / SGSC1412 / ATCC 700720</strain>
    </source>
</reference>
<protein>
    <recommendedName>
        <fullName>Type 1 fimbrin D-mannose specific adhesin</fullName>
    </recommendedName>
    <alternativeName>
        <fullName>Protein FimH</fullName>
    </alternativeName>
</protein>